<protein>
    <recommendedName>
        <fullName>Citrate synthase</fullName>
        <ecNumber>2.3.3.16</ecNumber>
    </recommendedName>
</protein>
<proteinExistence type="inferred from homology"/>
<feature type="chain" id="PRO_0000169975" description="Citrate synthase">
    <location>
        <begin position="1"/>
        <end position="386"/>
    </location>
</feature>
<feature type="active site" evidence="1">
    <location>
        <position position="266"/>
    </location>
</feature>
<feature type="active site" evidence="1">
    <location>
        <position position="322"/>
    </location>
</feature>
<organism>
    <name type="scientific">Acidithiobacillus ferridurans</name>
    <dbReference type="NCBI Taxonomy" id="1232575"/>
    <lineage>
        <taxon>Bacteria</taxon>
        <taxon>Pseudomonadati</taxon>
        <taxon>Pseudomonadota</taxon>
        <taxon>Acidithiobacillia</taxon>
        <taxon>Acidithiobacillales</taxon>
        <taxon>Acidithiobacillaceae</taxon>
        <taxon>Acidithiobacillus</taxon>
    </lineage>
</organism>
<dbReference type="EC" id="2.3.3.16"/>
<dbReference type="EMBL" id="U81808">
    <property type="protein sequence ID" value="AAB41629.1"/>
    <property type="molecule type" value="Genomic_DNA"/>
</dbReference>
<dbReference type="PIR" id="D59237">
    <property type="entry name" value="D59237"/>
</dbReference>
<dbReference type="SMR" id="P51045"/>
<dbReference type="UniPathway" id="UPA00223">
    <property type="reaction ID" value="UER00717"/>
</dbReference>
<dbReference type="GO" id="GO:0005829">
    <property type="term" value="C:cytosol"/>
    <property type="evidence" value="ECO:0007669"/>
    <property type="project" value="TreeGrafter"/>
</dbReference>
<dbReference type="GO" id="GO:0004108">
    <property type="term" value="F:citrate (Si)-synthase activity"/>
    <property type="evidence" value="ECO:0007669"/>
    <property type="project" value="TreeGrafter"/>
</dbReference>
<dbReference type="GO" id="GO:0005975">
    <property type="term" value="P:carbohydrate metabolic process"/>
    <property type="evidence" value="ECO:0007669"/>
    <property type="project" value="TreeGrafter"/>
</dbReference>
<dbReference type="GO" id="GO:0006099">
    <property type="term" value="P:tricarboxylic acid cycle"/>
    <property type="evidence" value="ECO:0007669"/>
    <property type="project" value="UniProtKB-UniPathway"/>
</dbReference>
<dbReference type="CDD" id="cd06112">
    <property type="entry name" value="citrate_synt_like_1_1"/>
    <property type="match status" value="1"/>
</dbReference>
<dbReference type="Gene3D" id="1.10.580.10">
    <property type="entry name" value="Citrate Synthase, domain 1"/>
    <property type="match status" value="1"/>
</dbReference>
<dbReference type="Gene3D" id="1.10.230.10">
    <property type="entry name" value="Cytochrome P450-Terp, domain 2"/>
    <property type="match status" value="1"/>
</dbReference>
<dbReference type="InterPro" id="IPR011278">
    <property type="entry name" value="2-MeCitrate/Citrate_synth_II"/>
</dbReference>
<dbReference type="InterPro" id="IPR016142">
    <property type="entry name" value="Citrate_synth-like_lrg_a-sub"/>
</dbReference>
<dbReference type="InterPro" id="IPR016143">
    <property type="entry name" value="Citrate_synth-like_sm_a-sub"/>
</dbReference>
<dbReference type="InterPro" id="IPR002020">
    <property type="entry name" value="Citrate_synthase"/>
</dbReference>
<dbReference type="InterPro" id="IPR019810">
    <property type="entry name" value="Citrate_synthase_AS"/>
</dbReference>
<dbReference type="InterPro" id="IPR024176">
    <property type="entry name" value="Citrate_synthase_bac-typ"/>
</dbReference>
<dbReference type="InterPro" id="IPR036969">
    <property type="entry name" value="Citrate_synthase_sf"/>
</dbReference>
<dbReference type="NCBIfam" id="TIGR01800">
    <property type="entry name" value="cit_synth_II"/>
    <property type="match status" value="1"/>
</dbReference>
<dbReference type="NCBIfam" id="NF010639">
    <property type="entry name" value="PRK14036.1"/>
    <property type="match status" value="1"/>
</dbReference>
<dbReference type="PANTHER" id="PTHR11739">
    <property type="entry name" value="CITRATE SYNTHASE"/>
    <property type="match status" value="1"/>
</dbReference>
<dbReference type="PANTHER" id="PTHR11739:SF4">
    <property type="entry name" value="CITRATE SYNTHASE, PEROXISOMAL"/>
    <property type="match status" value="1"/>
</dbReference>
<dbReference type="Pfam" id="PF00285">
    <property type="entry name" value="Citrate_synt"/>
    <property type="match status" value="1"/>
</dbReference>
<dbReference type="PIRSF" id="PIRSF001369">
    <property type="entry name" value="Citrate_synth"/>
    <property type="match status" value="1"/>
</dbReference>
<dbReference type="PRINTS" id="PR00143">
    <property type="entry name" value="CITRTSNTHASE"/>
</dbReference>
<dbReference type="SUPFAM" id="SSF48256">
    <property type="entry name" value="Citrate synthase"/>
    <property type="match status" value="1"/>
</dbReference>
<dbReference type="PROSITE" id="PS00480">
    <property type="entry name" value="CITRATE_SYNTHASE"/>
    <property type="match status" value="1"/>
</dbReference>
<evidence type="ECO:0000255" key="1">
    <source>
        <dbReference type="PROSITE-ProRule" id="PRU10117"/>
    </source>
</evidence>
<evidence type="ECO:0000305" key="2"/>
<gene>
    <name type="primary">gltA</name>
</gene>
<comment type="catalytic activity">
    <reaction evidence="1">
        <text>oxaloacetate + acetyl-CoA + H2O = citrate + CoA + H(+)</text>
        <dbReference type="Rhea" id="RHEA:16845"/>
        <dbReference type="ChEBI" id="CHEBI:15377"/>
        <dbReference type="ChEBI" id="CHEBI:15378"/>
        <dbReference type="ChEBI" id="CHEBI:16452"/>
        <dbReference type="ChEBI" id="CHEBI:16947"/>
        <dbReference type="ChEBI" id="CHEBI:57287"/>
        <dbReference type="ChEBI" id="CHEBI:57288"/>
        <dbReference type="EC" id="2.3.3.16"/>
    </reaction>
</comment>
<comment type="pathway">
    <text>Carbohydrate metabolism; tricarboxylic acid cycle; isocitrate from oxaloacetate: step 1/2.</text>
</comment>
<comment type="miscellaneous">
    <text>Citrate synthase is found in nearly all cells capable of oxidative metabolism.</text>
</comment>
<comment type="similarity">
    <text evidence="2">Belongs to the citrate synthase family.</text>
</comment>
<accession>P51045</accession>
<sequence>MAEPNFAPGLEGVAATQSSISNIDGAAGLLSYRGFAIADLAAHSSFEEVALLLLDGVLPGAADLERFDHGLRAHRQVKYNVREIMKFMPVTGHPMDMLHCAVASLGMFYPQQELSDAERGNTLHLDAMAMRIIARMPTIVAMWEQMRFGNDPISPRPDLSHAANFLYMLSGREPDPAHTKILDSCLILHAEHTINASTFSVLVTGSTLTNPYHVIGGAIGTLAGPLHGGANQKVVEMLEEISSVQQVGAYLDRKMANKEKIWGFGHRIYKTRDPRAVILKGMMEDMASHGNLRHSSLFEIAIEVERQATERLGAQGIHANVDFYSGVLYHEMGIKADLFTPIFAMARSAGWLAHWREQLADNRIFRPTQVYTGEQDRRYVPVAQRT</sequence>
<keyword id="KW-0808">Transferase</keyword>
<keyword id="KW-0816">Tricarboxylic acid cycle</keyword>
<reference key="1">
    <citation type="journal article" date="1996" name="Microbiology">
        <title>The gene for gamma-glutamylcysteine synthetase from Thiobacillus ferrooxidans has low homology to its Escherichia coli equivalent and is linked to the gene for citrate synthase.</title>
        <authorList>
            <person name="Powles R.E."/>
            <person name="Deane S.M."/>
            <person name="Rawlings D.E."/>
        </authorList>
    </citation>
    <scope>NUCLEOTIDE SEQUENCE [GENOMIC DNA]</scope>
    <source>
        <strain>ATCC 33020 / DSM 29468 / JCM 18981 / 11Fe</strain>
    </source>
</reference>
<name>CISY_ACIFI</name>